<organism>
    <name type="scientific">Callithrix jacchus</name>
    <name type="common">White-tufted-ear marmoset</name>
    <dbReference type="NCBI Taxonomy" id="9483"/>
    <lineage>
        <taxon>Eukaryota</taxon>
        <taxon>Metazoa</taxon>
        <taxon>Chordata</taxon>
        <taxon>Craniata</taxon>
        <taxon>Vertebrata</taxon>
        <taxon>Euteleostomi</taxon>
        <taxon>Mammalia</taxon>
        <taxon>Eutheria</taxon>
        <taxon>Euarchontoglires</taxon>
        <taxon>Primates</taxon>
        <taxon>Haplorrhini</taxon>
        <taxon>Platyrrhini</taxon>
        <taxon>Cebidae</taxon>
        <taxon>Callitrichinae</taxon>
        <taxon>Callithrix</taxon>
        <taxon>Callithrix</taxon>
    </lineage>
</organism>
<comment type="function">
    <text evidence="1">Monomeric heme protein which primary function is to store oxygen and facilitate its diffusion within muscle tissues. Reversibly binds oxygen through a pentacoordinated heme iron and enables its timely and efficient release as needed during periods of heightened demand. Depending on the oxidative conditions of tissues and cells, and in addition to its ability to bind oxygen, it also has a nitrite reductase activity whereby it regulates the production of bioactive nitric oxide. Under stress conditions, like hypoxia and anoxia, it also protects cells against reactive oxygen species thanks to its pseudoperoxidase activity.</text>
</comment>
<comment type="catalytic activity">
    <reaction evidence="1">
        <text>Fe(III)-heme b-[protein] + nitric oxide + H2O = Fe(II)-heme b-[protein] + nitrite + 2 H(+)</text>
        <dbReference type="Rhea" id="RHEA:77711"/>
        <dbReference type="Rhea" id="RHEA-COMP:18975"/>
        <dbReference type="Rhea" id="RHEA-COMP:18976"/>
        <dbReference type="ChEBI" id="CHEBI:15377"/>
        <dbReference type="ChEBI" id="CHEBI:15378"/>
        <dbReference type="ChEBI" id="CHEBI:16301"/>
        <dbReference type="ChEBI" id="CHEBI:16480"/>
        <dbReference type="ChEBI" id="CHEBI:55376"/>
        <dbReference type="ChEBI" id="CHEBI:60344"/>
    </reaction>
    <physiologicalReaction direction="right-to-left" evidence="1">
        <dbReference type="Rhea" id="RHEA:77713"/>
    </physiologicalReaction>
</comment>
<comment type="catalytic activity">
    <reaction evidence="1">
        <text>H2O2 + AH2 = A + 2 H2O</text>
        <dbReference type="Rhea" id="RHEA:30275"/>
        <dbReference type="ChEBI" id="CHEBI:13193"/>
        <dbReference type="ChEBI" id="CHEBI:15377"/>
        <dbReference type="ChEBI" id="CHEBI:16240"/>
        <dbReference type="ChEBI" id="CHEBI:17499"/>
    </reaction>
</comment>
<comment type="subunit">
    <text evidence="2">Monomeric.</text>
</comment>
<comment type="subcellular location">
    <subcellularLocation>
        <location evidence="1">Cytoplasm</location>
        <location evidence="1">Sarcoplasm</location>
    </subcellularLocation>
</comment>
<comment type="miscellaneous">
    <text>Marmoset, woolly monkey, and squirrel monkey have a minor myoglobin component that appears to differ from each major component in having Phe-Lys preceding position 2.</text>
</comment>
<comment type="similarity">
    <text evidence="7">Belongs to the globin family.</text>
</comment>
<accession>P02152</accession>
<sequence length="154" mass="17175">MGLSDGEWQLVLNVWGKVEADIPSHGQEVLISLFKGHPETLEKFDKFKHLKSEDEMKASEELKKHGVTVLTALGGILKKKGHHEAELKPLAQSHATKHKIPVKYLEFISDAIVHVLQKKHPGDFGADAQGAMKKALELFRNDMAAKYKELGFQG</sequence>
<dbReference type="EC" id="1.7.-.-" evidence="1"/>
<dbReference type="EC" id="1.11.1.-" evidence="1"/>
<dbReference type="PIR" id="A90587">
    <property type="entry name" value="MYCJ"/>
</dbReference>
<dbReference type="RefSeq" id="XP_002743768.2">
    <property type="nucleotide sequence ID" value="XM_002743722.4"/>
</dbReference>
<dbReference type="RefSeq" id="XP_009008163.2">
    <property type="nucleotide sequence ID" value="XM_009009915.2"/>
</dbReference>
<dbReference type="RefSeq" id="XP_054096695.1">
    <property type="nucleotide sequence ID" value="XM_054240720.1"/>
</dbReference>
<dbReference type="SMR" id="P02152"/>
<dbReference type="FunCoup" id="P02152">
    <property type="interactions" value="158"/>
</dbReference>
<dbReference type="STRING" id="9483.ENSCJAP00000000863"/>
<dbReference type="Ensembl" id="ENSCJAT00000000921.5">
    <property type="protein sequence ID" value="ENSCJAP00000000863.5"/>
    <property type="gene ID" value="ENSCJAG00000000506.5"/>
</dbReference>
<dbReference type="GeneID" id="100414708"/>
<dbReference type="eggNOG" id="KOG3378">
    <property type="taxonomic scope" value="Eukaryota"/>
</dbReference>
<dbReference type="GeneTree" id="ENSGT00940000160809"/>
<dbReference type="InParanoid" id="P02152"/>
<dbReference type="OMA" id="VIIRMFQ"/>
<dbReference type="OrthoDB" id="6344802at2759"/>
<dbReference type="Proteomes" id="UP000008225">
    <property type="component" value="Chromosome 1"/>
</dbReference>
<dbReference type="GO" id="GO:0070062">
    <property type="term" value="C:extracellular exosome"/>
    <property type="evidence" value="ECO:0007669"/>
    <property type="project" value="TreeGrafter"/>
</dbReference>
<dbReference type="GO" id="GO:0016528">
    <property type="term" value="C:sarcoplasm"/>
    <property type="evidence" value="ECO:0000250"/>
    <property type="project" value="UniProtKB"/>
</dbReference>
<dbReference type="GO" id="GO:0020037">
    <property type="term" value="F:heme binding"/>
    <property type="evidence" value="ECO:0007669"/>
    <property type="project" value="InterPro"/>
</dbReference>
<dbReference type="GO" id="GO:0046872">
    <property type="term" value="F:metal ion binding"/>
    <property type="evidence" value="ECO:0007669"/>
    <property type="project" value="UniProtKB-KW"/>
</dbReference>
<dbReference type="GO" id="GO:0098809">
    <property type="term" value="F:nitrite reductase activity"/>
    <property type="evidence" value="ECO:0000250"/>
    <property type="project" value="UniProtKB"/>
</dbReference>
<dbReference type="GO" id="GO:0019825">
    <property type="term" value="F:oxygen binding"/>
    <property type="evidence" value="ECO:0007669"/>
    <property type="project" value="InterPro"/>
</dbReference>
<dbReference type="GO" id="GO:0005344">
    <property type="term" value="F:oxygen carrier activity"/>
    <property type="evidence" value="ECO:0000250"/>
    <property type="project" value="UniProtKB"/>
</dbReference>
<dbReference type="GO" id="GO:0004601">
    <property type="term" value="F:peroxidase activity"/>
    <property type="evidence" value="ECO:0000250"/>
    <property type="project" value="UniProtKB"/>
</dbReference>
<dbReference type="GO" id="GO:0019430">
    <property type="term" value="P:removal of superoxide radicals"/>
    <property type="evidence" value="ECO:0000250"/>
    <property type="project" value="UniProtKB"/>
</dbReference>
<dbReference type="CDD" id="cd08926">
    <property type="entry name" value="Mb"/>
    <property type="match status" value="1"/>
</dbReference>
<dbReference type="Gene3D" id="6.10.140.2100">
    <property type="match status" value="1"/>
</dbReference>
<dbReference type="Gene3D" id="6.10.140.2110">
    <property type="match status" value="1"/>
</dbReference>
<dbReference type="InterPro" id="IPR000971">
    <property type="entry name" value="Globin"/>
</dbReference>
<dbReference type="InterPro" id="IPR009050">
    <property type="entry name" value="Globin-like_sf"/>
</dbReference>
<dbReference type="InterPro" id="IPR002335">
    <property type="entry name" value="Myoglobin"/>
</dbReference>
<dbReference type="PANTHER" id="PTHR47132">
    <property type="entry name" value="MYOGLOBIN"/>
    <property type="match status" value="1"/>
</dbReference>
<dbReference type="PANTHER" id="PTHR47132:SF1">
    <property type="entry name" value="MYOGLOBIN"/>
    <property type="match status" value="1"/>
</dbReference>
<dbReference type="Pfam" id="PF00042">
    <property type="entry name" value="Globin"/>
    <property type="match status" value="1"/>
</dbReference>
<dbReference type="PRINTS" id="PR00613">
    <property type="entry name" value="MYOGLOBIN"/>
</dbReference>
<dbReference type="SUPFAM" id="SSF46458">
    <property type="entry name" value="Globin-like"/>
    <property type="match status" value="1"/>
</dbReference>
<dbReference type="PROSITE" id="PS01033">
    <property type="entry name" value="GLOBIN"/>
    <property type="match status" value="1"/>
</dbReference>
<feature type="initiator methionine" description="Removed" evidence="8">
    <location>
        <position position="1"/>
    </location>
</feature>
<feature type="chain" id="PRO_0000053281" description="Myoglobin">
    <location>
        <begin position="2"/>
        <end position="154"/>
    </location>
</feature>
<feature type="domain" description="Globin" evidence="7">
    <location>
        <begin position="2"/>
        <end position="148"/>
    </location>
</feature>
<feature type="binding site" evidence="5">
    <location>
        <position position="65"/>
    </location>
    <ligand>
        <name>nitrite</name>
        <dbReference type="ChEBI" id="CHEBI:16301"/>
    </ligand>
</feature>
<feature type="binding site" evidence="3 7">
    <location>
        <position position="65"/>
    </location>
    <ligand>
        <name>O2</name>
        <dbReference type="ChEBI" id="CHEBI:15379"/>
    </ligand>
</feature>
<feature type="binding site" description="proximal binding residue" evidence="1">
    <location>
        <position position="94"/>
    </location>
    <ligand>
        <name>heme b</name>
        <dbReference type="ChEBI" id="CHEBI:60344"/>
    </ligand>
    <ligandPart>
        <name>Fe</name>
        <dbReference type="ChEBI" id="CHEBI:18248"/>
    </ligandPart>
</feature>
<feature type="modified residue" description="Phosphoserine" evidence="6">
    <location>
        <position position="4"/>
    </location>
</feature>
<feature type="modified residue" description="Phosphothreonine" evidence="4">
    <location>
        <position position="68"/>
    </location>
</feature>
<feature type="sequence variant" description="In minor component.">
    <original>G</original>
    <variation>FKG</variation>
    <location>
        <position position="2"/>
    </location>
</feature>
<feature type="sequence variant">
    <original>K</original>
    <variation>R</variation>
    <location>
        <position position="63"/>
    </location>
</feature>
<evidence type="ECO:0000250" key="1">
    <source>
        <dbReference type="UniProtKB" id="P02144"/>
    </source>
</evidence>
<evidence type="ECO:0000250" key="2">
    <source>
        <dbReference type="UniProtKB" id="P02185"/>
    </source>
</evidence>
<evidence type="ECO:0000250" key="3">
    <source>
        <dbReference type="UniProtKB" id="P02189"/>
    </source>
</evidence>
<evidence type="ECO:0000250" key="4">
    <source>
        <dbReference type="UniProtKB" id="P04247"/>
    </source>
</evidence>
<evidence type="ECO:0000250" key="5">
    <source>
        <dbReference type="UniProtKB" id="P68082"/>
    </source>
</evidence>
<evidence type="ECO:0000250" key="6">
    <source>
        <dbReference type="UniProtKB" id="Q9QZ76"/>
    </source>
</evidence>
<evidence type="ECO:0000255" key="7">
    <source>
        <dbReference type="PROSITE-ProRule" id="PRU00238"/>
    </source>
</evidence>
<evidence type="ECO:0000269" key="8">
    <source>
    </source>
</evidence>
<name>MYG_CALJA</name>
<keyword id="KW-0963">Cytoplasm</keyword>
<keyword id="KW-0903">Direct protein sequencing</keyword>
<keyword id="KW-0349">Heme</keyword>
<keyword id="KW-0408">Iron</keyword>
<keyword id="KW-0479">Metal-binding</keyword>
<keyword id="KW-0514">Muscle protein</keyword>
<keyword id="KW-0560">Oxidoreductase</keyword>
<keyword id="KW-0561">Oxygen transport</keyword>
<keyword id="KW-0597">Phosphoprotein</keyword>
<keyword id="KW-1185">Reference proteome</keyword>
<keyword id="KW-0813">Transport</keyword>
<proteinExistence type="evidence at protein level"/>
<gene>
    <name type="primary">MB</name>
</gene>
<reference key="1">
    <citation type="journal article" date="1973" name="Biochim. Biophys. Acta">
        <title>The myoglobin of primates. 4. New World monkeys: Cebidae: (1) Saimiri sciureus (squirrel monkey); (2) Lagothrix lagothricha (Humboldt's woolly monkey). Callitrichidae: Callithrix jacchus (common marmoset).</title>
        <authorList>
            <person name="Romero-Herrera A.E."/>
            <person name="Lehmann H."/>
        </authorList>
    </citation>
    <scope>PROTEIN SEQUENCE OF 2-154</scope>
    <source>
        <tissue>Skeletal muscle</tissue>
    </source>
</reference>
<reference key="2">
    <citation type="journal article" date="1973" name="FEBS Lett.">
        <title>N-terminal chain elongation as evidence for duplication of myoglobin in three South American monkeys.</title>
        <authorList>
            <person name="Romero-Herrera A.E."/>
            <person name="Lehmann H."/>
        </authorList>
    </citation>
    <scope>PARTIAL PROTEIN SEQUENCE (MINOR COMPONENT)</scope>
</reference>
<protein>
    <recommendedName>
        <fullName>Myoglobin</fullName>
    </recommendedName>
    <alternativeName>
        <fullName evidence="1">Nitrite reductase MB</fullName>
        <ecNumber evidence="1">1.7.-.-</ecNumber>
    </alternativeName>
    <alternativeName>
        <fullName evidence="1">Pseudoperoxidase MB</fullName>
        <ecNumber evidence="1">1.11.1.-</ecNumber>
    </alternativeName>
</protein>